<proteinExistence type="inferred from homology"/>
<name>NRDR_STREM</name>
<dbReference type="EMBL" id="CP001129">
    <property type="protein sequence ID" value="ACG62995.1"/>
    <property type="molecule type" value="Genomic_DNA"/>
</dbReference>
<dbReference type="RefSeq" id="WP_012516251.1">
    <property type="nucleotide sequence ID" value="NC_011134.1"/>
</dbReference>
<dbReference type="SMR" id="B4U4S8"/>
<dbReference type="GeneID" id="83705525"/>
<dbReference type="KEGG" id="sez:Sez_1664"/>
<dbReference type="HOGENOM" id="CLU_108412_0_0_9"/>
<dbReference type="Proteomes" id="UP000001873">
    <property type="component" value="Chromosome"/>
</dbReference>
<dbReference type="GO" id="GO:0005524">
    <property type="term" value="F:ATP binding"/>
    <property type="evidence" value="ECO:0007669"/>
    <property type="project" value="UniProtKB-KW"/>
</dbReference>
<dbReference type="GO" id="GO:0003677">
    <property type="term" value="F:DNA binding"/>
    <property type="evidence" value="ECO:0007669"/>
    <property type="project" value="UniProtKB-KW"/>
</dbReference>
<dbReference type="GO" id="GO:0008270">
    <property type="term" value="F:zinc ion binding"/>
    <property type="evidence" value="ECO:0007669"/>
    <property type="project" value="UniProtKB-UniRule"/>
</dbReference>
<dbReference type="GO" id="GO:0045892">
    <property type="term" value="P:negative regulation of DNA-templated transcription"/>
    <property type="evidence" value="ECO:0007669"/>
    <property type="project" value="UniProtKB-UniRule"/>
</dbReference>
<dbReference type="HAMAP" id="MF_00440">
    <property type="entry name" value="NrdR"/>
    <property type="match status" value="1"/>
</dbReference>
<dbReference type="InterPro" id="IPR005144">
    <property type="entry name" value="ATP-cone_dom"/>
</dbReference>
<dbReference type="InterPro" id="IPR055173">
    <property type="entry name" value="NrdR-like_N"/>
</dbReference>
<dbReference type="InterPro" id="IPR003796">
    <property type="entry name" value="RNR_NrdR-like"/>
</dbReference>
<dbReference type="NCBIfam" id="TIGR00244">
    <property type="entry name" value="transcriptional regulator NrdR"/>
    <property type="match status" value="1"/>
</dbReference>
<dbReference type="PANTHER" id="PTHR30455">
    <property type="entry name" value="TRANSCRIPTIONAL REPRESSOR NRDR"/>
    <property type="match status" value="1"/>
</dbReference>
<dbReference type="PANTHER" id="PTHR30455:SF2">
    <property type="entry name" value="TRANSCRIPTIONAL REPRESSOR NRDR"/>
    <property type="match status" value="1"/>
</dbReference>
<dbReference type="Pfam" id="PF03477">
    <property type="entry name" value="ATP-cone"/>
    <property type="match status" value="1"/>
</dbReference>
<dbReference type="Pfam" id="PF22811">
    <property type="entry name" value="Zn_ribbon_NrdR"/>
    <property type="match status" value="1"/>
</dbReference>
<dbReference type="PROSITE" id="PS51161">
    <property type="entry name" value="ATP_CONE"/>
    <property type="match status" value="1"/>
</dbReference>
<gene>
    <name evidence="1" type="primary">nrdR</name>
    <name type="ordered locus">Sez_1664</name>
</gene>
<feature type="chain" id="PRO_1000124551" description="Transcriptional repressor NrdR">
    <location>
        <begin position="1"/>
        <end position="164"/>
    </location>
</feature>
<feature type="domain" description="ATP-cone" evidence="1">
    <location>
        <begin position="49"/>
        <end position="139"/>
    </location>
</feature>
<feature type="zinc finger region" evidence="1">
    <location>
        <begin position="3"/>
        <end position="34"/>
    </location>
</feature>
<sequence>MRCPKCNYNKSSVVDSRQAEDGNTIRRRRECESCHTRFTTFERLEELPLLVIKKDGTREQFSRDKILNGVVQSAQKRPVSSTDIENLISRIEQKVRTAYENEVSSTVIGNLVMEELAELDEITYVRFASVYKSFKDLDEIEELLQQITNRVRGKKKSSVDDEAY</sequence>
<keyword id="KW-0067">ATP-binding</keyword>
<keyword id="KW-0238">DNA-binding</keyword>
<keyword id="KW-0479">Metal-binding</keyword>
<keyword id="KW-0547">Nucleotide-binding</keyword>
<keyword id="KW-0678">Repressor</keyword>
<keyword id="KW-0804">Transcription</keyword>
<keyword id="KW-0805">Transcription regulation</keyword>
<keyword id="KW-0862">Zinc</keyword>
<keyword id="KW-0863">Zinc-finger</keyword>
<reference key="1">
    <citation type="journal article" date="2008" name="PLoS ONE">
        <title>Genome sequence of a lancefield group C Streptococcus zooepidemicus strain causing epidemic nephritis: new information about an old disease.</title>
        <authorList>
            <person name="Beres S.B."/>
            <person name="Sesso R."/>
            <person name="Pinto S.W.L."/>
            <person name="Hoe N.P."/>
            <person name="Porcella S.F."/>
            <person name="Deleo F.R."/>
            <person name="Musser J.M."/>
        </authorList>
    </citation>
    <scope>NUCLEOTIDE SEQUENCE [LARGE SCALE GENOMIC DNA]</scope>
    <source>
        <strain>MGCS10565</strain>
    </source>
</reference>
<protein>
    <recommendedName>
        <fullName evidence="1">Transcriptional repressor NrdR</fullName>
    </recommendedName>
</protein>
<accession>B4U4S8</accession>
<evidence type="ECO:0000255" key="1">
    <source>
        <dbReference type="HAMAP-Rule" id="MF_00440"/>
    </source>
</evidence>
<organism>
    <name type="scientific">Streptococcus equi subsp. zooepidemicus (strain MGCS10565)</name>
    <dbReference type="NCBI Taxonomy" id="552526"/>
    <lineage>
        <taxon>Bacteria</taxon>
        <taxon>Bacillati</taxon>
        <taxon>Bacillota</taxon>
        <taxon>Bacilli</taxon>
        <taxon>Lactobacillales</taxon>
        <taxon>Streptococcaceae</taxon>
        <taxon>Streptococcus</taxon>
    </lineage>
</organism>
<comment type="function">
    <text evidence="1">Negatively regulates transcription of bacterial ribonucleotide reductase nrd genes and operons by binding to NrdR-boxes.</text>
</comment>
<comment type="cofactor">
    <cofactor evidence="1">
        <name>Zn(2+)</name>
        <dbReference type="ChEBI" id="CHEBI:29105"/>
    </cofactor>
    <text evidence="1">Binds 1 zinc ion.</text>
</comment>
<comment type="similarity">
    <text evidence="1">Belongs to the NrdR family.</text>
</comment>